<sequence length="347" mass="37384">MRIEEDLKLGFKDVLIRPKRSTLKSRSDVELERQFTFKHSGQSWSGVPIIAANMDTVGTFSMASALASFDILTAVHKHYSVEEWQAFINNSSADVLKHVMVSTGTSDADFEKTKQILDLNPALNFVCIDVANGYSEHFVQFVAKAREAWPTKTICAGNVVTGEMCEELILSGADIVKVGIGPGSVCTTRVKTGVGYPQLSAVIECADAAHGLGGMIVSDGGCTTPGDVAKAFGGGADFVMLGGMLAGHEESGGRIVEENGEKFMLFYGMSSESAMKRHVGGVAEYRAAEGKTVKLPLRGPVENTARDILGGLRSACTYVGASRLKELTKRTTFIRVQEQENRIFNNL</sequence>
<gene>
    <name evidence="1" type="primary">guaC</name>
    <name type="ordered locus">ECDH10B_0085</name>
</gene>
<comment type="function">
    <text evidence="1">Catalyzes the irreversible NADPH-dependent deamination of GMP to IMP. It functions in the conversion of nucleobase, nucleoside and nucleotide derivatives of G to A nucleotides, and in maintaining the intracellular balance of A and G nucleotides.</text>
</comment>
<comment type="catalytic activity">
    <reaction evidence="1">
        <text>IMP + NH4(+) + NADP(+) = GMP + NADPH + 2 H(+)</text>
        <dbReference type="Rhea" id="RHEA:17185"/>
        <dbReference type="ChEBI" id="CHEBI:15378"/>
        <dbReference type="ChEBI" id="CHEBI:28938"/>
        <dbReference type="ChEBI" id="CHEBI:57783"/>
        <dbReference type="ChEBI" id="CHEBI:58053"/>
        <dbReference type="ChEBI" id="CHEBI:58115"/>
        <dbReference type="ChEBI" id="CHEBI:58349"/>
        <dbReference type="EC" id="1.7.1.7"/>
    </reaction>
</comment>
<comment type="subunit">
    <text evidence="1">Homotetramer.</text>
</comment>
<comment type="similarity">
    <text evidence="1">Belongs to the IMPDH/GMPR family. GuaC type 1 subfamily.</text>
</comment>
<name>GUAC_ECODH</name>
<protein>
    <recommendedName>
        <fullName evidence="1">GMP reductase</fullName>
        <ecNumber evidence="1">1.7.1.7</ecNumber>
    </recommendedName>
    <alternativeName>
        <fullName evidence="1">Guanosine 5'-monophosphate oxidoreductase</fullName>
        <shortName evidence="1">Guanosine monophosphate reductase</shortName>
    </alternativeName>
</protein>
<keyword id="KW-0479">Metal-binding</keyword>
<keyword id="KW-0521">NADP</keyword>
<keyword id="KW-0560">Oxidoreductase</keyword>
<keyword id="KW-0630">Potassium</keyword>
<dbReference type="EC" id="1.7.1.7" evidence="1"/>
<dbReference type="EMBL" id="CP000948">
    <property type="protein sequence ID" value="ACB01284.1"/>
    <property type="molecule type" value="Genomic_DNA"/>
</dbReference>
<dbReference type="RefSeq" id="WP_001217338.1">
    <property type="nucleotide sequence ID" value="NC_010473.1"/>
</dbReference>
<dbReference type="SMR" id="B1XC80"/>
<dbReference type="GeneID" id="93777331"/>
<dbReference type="KEGG" id="ecd:ECDH10B_0085"/>
<dbReference type="HOGENOM" id="CLU_022552_5_3_6"/>
<dbReference type="GO" id="GO:0005829">
    <property type="term" value="C:cytosol"/>
    <property type="evidence" value="ECO:0007669"/>
    <property type="project" value="TreeGrafter"/>
</dbReference>
<dbReference type="GO" id="GO:1902560">
    <property type="term" value="C:GMP reductase complex"/>
    <property type="evidence" value="ECO:0007669"/>
    <property type="project" value="InterPro"/>
</dbReference>
<dbReference type="GO" id="GO:0003920">
    <property type="term" value="F:GMP reductase activity"/>
    <property type="evidence" value="ECO:0007669"/>
    <property type="project" value="UniProtKB-UniRule"/>
</dbReference>
<dbReference type="GO" id="GO:0046872">
    <property type="term" value="F:metal ion binding"/>
    <property type="evidence" value="ECO:0007669"/>
    <property type="project" value="UniProtKB-KW"/>
</dbReference>
<dbReference type="GO" id="GO:0006163">
    <property type="term" value="P:purine nucleotide metabolic process"/>
    <property type="evidence" value="ECO:0007669"/>
    <property type="project" value="UniProtKB-UniRule"/>
</dbReference>
<dbReference type="CDD" id="cd00381">
    <property type="entry name" value="IMPDH"/>
    <property type="match status" value="1"/>
</dbReference>
<dbReference type="FunFam" id="3.20.20.70:FF:000012">
    <property type="entry name" value="GMP reductase"/>
    <property type="match status" value="1"/>
</dbReference>
<dbReference type="Gene3D" id="3.20.20.70">
    <property type="entry name" value="Aldolase class I"/>
    <property type="match status" value="1"/>
</dbReference>
<dbReference type="HAMAP" id="MF_00596">
    <property type="entry name" value="GMP_reduct_type1"/>
    <property type="match status" value="1"/>
</dbReference>
<dbReference type="InterPro" id="IPR013785">
    <property type="entry name" value="Aldolase_TIM"/>
</dbReference>
<dbReference type="InterPro" id="IPR050139">
    <property type="entry name" value="GMP_reductase"/>
</dbReference>
<dbReference type="InterPro" id="IPR005993">
    <property type="entry name" value="GMPR"/>
</dbReference>
<dbReference type="InterPro" id="IPR015875">
    <property type="entry name" value="IMP_DH/GMP_Rdtase_CS"/>
</dbReference>
<dbReference type="InterPro" id="IPR001093">
    <property type="entry name" value="IMP_DH_GMPRt"/>
</dbReference>
<dbReference type="NCBIfam" id="TIGR01305">
    <property type="entry name" value="GMP_reduct_1"/>
    <property type="match status" value="1"/>
</dbReference>
<dbReference type="NCBIfam" id="NF003470">
    <property type="entry name" value="PRK05096.1"/>
    <property type="match status" value="1"/>
</dbReference>
<dbReference type="PANTHER" id="PTHR43170">
    <property type="entry name" value="GMP REDUCTASE"/>
    <property type="match status" value="1"/>
</dbReference>
<dbReference type="PANTHER" id="PTHR43170:SF5">
    <property type="entry name" value="GMP REDUCTASE"/>
    <property type="match status" value="1"/>
</dbReference>
<dbReference type="Pfam" id="PF00478">
    <property type="entry name" value="IMPDH"/>
    <property type="match status" value="1"/>
</dbReference>
<dbReference type="PIRSF" id="PIRSF000235">
    <property type="entry name" value="GMP_reductase"/>
    <property type="match status" value="1"/>
</dbReference>
<dbReference type="SMART" id="SM01240">
    <property type="entry name" value="IMPDH"/>
    <property type="match status" value="1"/>
</dbReference>
<dbReference type="SUPFAM" id="SSF51412">
    <property type="entry name" value="Inosine monophosphate dehydrogenase (IMPDH)"/>
    <property type="match status" value="1"/>
</dbReference>
<dbReference type="PROSITE" id="PS00487">
    <property type="entry name" value="IMP_DH_GMP_RED"/>
    <property type="match status" value="1"/>
</dbReference>
<reference key="1">
    <citation type="journal article" date="2008" name="J. Bacteriol.">
        <title>The complete genome sequence of Escherichia coli DH10B: insights into the biology of a laboratory workhorse.</title>
        <authorList>
            <person name="Durfee T."/>
            <person name="Nelson R."/>
            <person name="Baldwin S."/>
            <person name="Plunkett G. III"/>
            <person name="Burland V."/>
            <person name="Mau B."/>
            <person name="Petrosino J.F."/>
            <person name="Qin X."/>
            <person name="Muzny D.M."/>
            <person name="Ayele M."/>
            <person name="Gibbs R.A."/>
            <person name="Csorgo B."/>
            <person name="Posfai G."/>
            <person name="Weinstock G.M."/>
            <person name="Blattner F.R."/>
        </authorList>
    </citation>
    <scope>NUCLEOTIDE SEQUENCE [LARGE SCALE GENOMIC DNA]</scope>
    <source>
        <strain>K12 / DH10B</strain>
    </source>
</reference>
<accession>B1XC80</accession>
<organism>
    <name type="scientific">Escherichia coli (strain K12 / DH10B)</name>
    <dbReference type="NCBI Taxonomy" id="316385"/>
    <lineage>
        <taxon>Bacteria</taxon>
        <taxon>Pseudomonadati</taxon>
        <taxon>Pseudomonadota</taxon>
        <taxon>Gammaproteobacteria</taxon>
        <taxon>Enterobacterales</taxon>
        <taxon>Enterobacteriaceae</taxon>
        <taxon>Escherichia</taxon>
    </lineage>
</organism>
<feature type="chain" id="PRO_1000129854" description="GMP reductase">
    <location>
        <begin position="1"/>
        <end position="347"/>
    </location>
</feature>
<feature type="active site" description="Thioimidate intermediate" evidence="1">
    <location>
        <position position="186"/>
    </location>
</feature>
<feature type="binding site" evidence="1">
    <location>
        <begin position="108"/>
        <end position="131"/>
    </location>
    <ligand>
        <name>NADP(+)</name>
        <dbReference type="ChEBI" id="CHEBI:58349"/>
    </ligand>
</feature>
<feature type="binding site" evidence="1">
    <location>
        <position position="181"/>
    </location>
    <ligand>
        <name>K(+)</name>
        <dbReference type="ChEBI" id="CHEBI:29103"/>
    </ligand>
</feature>
<feature type="binding site" evidence="1">
    <location>
        <position position="183"/>
    </location>
    <ligand>
        <name>K(+)</name>
        <dbReference type="ChEBI" id="CHEBI:29103"/>
    </ligand>
</feature>
<feature type="binding site" evidence="1">
    <location>
        <begin position="216"/>
        <end position="239"/>
    </location>
    <ligand>
        <name>NADP(+)</name>
        <dbReference type="ChEBI" id="CHEBI:58349"/>
    </ligand>
</feature>
<evidence type="ECO:0000255" key="1">
    <source>
        <dbReference type="HAMAP-Rule" id="MF_00596"/>
    </source>
</evidence>
<proteinExistence type="inferred from homology"/>